<feature type="chain" id="PRO_1000201027" description="Glutamate-1-semialdehyde 2,1-aminomutase">
    <location>
        <begin position="1"/>
        <end position="446"/>
    </location>
</feature>
<feature type="modified residue" description="N6-(pyridoxal phosphate)lysine" evidence="1">
    <location>
        <position position="279"/>
    </location>
</feature>
<protein>
    <recommendedName>
        <fullName evidence="1">Glutamate-1-semialdehyde 2,1-aminomutase</fullName>
        <shortName evidence="1">GSA</shortName>
        <ecNumber evidence="1">5.4.3.8</ecNumber>
    </recommendedName>
    <alternativeName>
        <fullName evidence="1">Glutamate-1-semialdehyde aminotransferase</fullName>
        <shortName evidence="1">GSA-AT</shortName>
    </alternativeName>
</protein>
<evidence type="ECO:0000255" key="1">
    <source>
        <dbReference type="HAMAP-Rule" id="MF_00375"/>
    </source>
</evidence>
<sequence length="446" mass="45790">MGSTDQATAPAGPAVSISAKLFEDACAVIPGGVNSPVRAFSAVGGTPLFITEARGCWLTDADGRRYVDLVCSWGPMILGHAHPAVVDAVATVAASGLSFGAPTPAETQLAAEIIGRMAPVERIRLVNSGTEATMSAVRLARGFTGRTKIIKFSGCYHGHVDALLADAGSGVATLSLPSSPGVTGAAAADTIVLPYNDIEAVRQTFARLGDQIAAVITEASPGNMGVVPPAPGYNAALRAITAEHGALLIIDEVMTGFRVSRSGWYGLDPVAADLFIFGKVMSGGMPAAAFGGRAEVMERLAPLGPVYQAGTLSGNPVAMAAGLATLRAAADAVYATLDRNADRLVAMLSEALTDAGVPHQIPRAGNMFSVFFSEAPVTDFASACNSQVWRYPAFFHALLDAGVYPPCSTFEAWFVSAALDDAAFGRIVDALPGAAAAAVAARHRES</sequence>
<name>GSA_MYCLB</name>
<comment type="catalytic activity">
    <reaction evidence="1">
        <text>(S)-4-amino-5-oxopentanoate = 5-aminolevulinate</text>
        <dbReference type="Rhea" id="RHEA:14265"/>
        <dbReference type="ChEBI" id="CHEBI:57501"/>
        <dbReference type="ChEBI" id="CHEBI:356416"/>
        <dbReference type="EC" id="5.4.3.8"/>
    </reaction>
</comment>
<comment type="cofactor">
    <cofactor evidence="1">
        <name>pyridoxal 5'-phosphate</name>
        <dbReference type="ChEBI" id="CHEBI:597326"/>
    </cofactor>
</comment>
<comment type="pathway">
    <text evidence="1">Porphyrin-containing compound metabolism; protoporphyrin-IX biosynthesis; 5-aminolevulinate from L-glutamyl-tRNA(Glu): step 2/2.</text>
</comment>
<comment type="subunit">
    <text evidence="1">Homodimer.</text>
</comment>
<comment type="subcellular location">
    <subcellularLocation>
        <location evidence="1">Cytoplasm</location>
    </subcellularLocation>
</comment>
<comment type="similarity">
    <text evidence="1">Belongs to the class-III pyridoxal-phosphate-dependent aminotransferase family. HemL subfamily.</text>
</comment>
<keyword id="KW-0963">Cytoplasm</keyword>
<keyword id="KW-0413">Isomerase</keyword>
<keyword id="KW-0627">Porphyrin biosynthesis</keyword>
<keyword id="KW-0663">Pyridoxal phosphate</keyword>
<dbReference type="EC" id="5.4.3.8" evidence="1"/>
<dbReference type="EMBL" id="FM211192">
    <property type="protein sequence ID" value="CAR72512.1"/>
    <property type="molecule type" value="Genomic_DNA"/>
</dbReference>
<dbReference type="SMR" id="B8ZT67"/>
<dbReference type="KEGG" id="mlb:MLBr02414"/>
<dbReference type="HOGENOM" id="CLU_016922_1_5_11"/>
<dbReference type="UniPathway" id="UPA00251">
    <property type="reaction ID" value="UER00317"/>
</dbReference>
<dbReference type="Proteomes" id="UP000006900">
    <property type="component" value="Chromosome"/>
</dbReference>
<dbReference type="GO" id="GO:0005737">
    <property type="term" value="C:cytoplasm"/>
    <property type="evidence" value="ECO:0007669"/>
    <property type="project" value="UniProtKB-SubCell"/>
</dbReference>
<dbReference type="GO" id="GO:0042286">
    <property type="term" value="F:glutamate-1-semialdehyde 2,1-aminomutase activity"/>
    <property type="evidence" value="ECO:0007669"/>
    <property type="project" value="UniProtKB-UniRule"/>
</dbReference>
<dbReference type="GO" id="GO:0030170">
    <property type="term" value="F:pyridoxal phosphate binding"/>
    <property type="evidence" value="ECO:0007669"/>
    <property type="project" value="InterPro"/>
</dbReference>
<dbReference type="GO" id="GO:0008483">
    <property type="term" value="F:transaminase activity"/>
    <property type="evidence" value="ECO:0007669"/>
    <property type="project" value="InterPro"/>
</dbReference>
<dbReference type="GO" id="GO:0006782">
    <property type="term" value="P:protoporphyrinogen IX biosynthetic process"/>
    <property type="evidence" value="ECO:0007669"/>
    <property type="project" value="UniProtKB-UniRule"/>
</dbReference>
<dbReference type="CDD" id="cd00610">
    <property type="entry name" value="OAT_like"/>
    <property type="match status" value="1"/>
</dbReference>
<dbReference type="FunFam" id="3.40.640.10:FF:000021">
    <property type="entry name" value="Glutamate-1-semialdehyde 2,1-aminomutase"/>
    <property type="match status" value="1"/>
</dbReference>
<dbReference type="Gene3D" id="3.90.1150.10">
    <property type="entry name" value="Aspartate Aminotransferase, domain 1"/>
    <property type="match status" value="1"/>
</dbReference>
<dbReference type="Gene3D" id="3.40.640.10">
    <property type="entry name" value="Type I PLP-dependent aspartate aminotransferase-like (Major domain)"/>
    <property type="match status" value="1"/>
</dbReference>
<dbReference type="HAMAP" id="MF_00375">
    <property type="entry name" value="HemL_aminotrans_3"/>
    <property type="match status" value="1"/>
</dbReference>
<dbReference type="InterPro" id="IPR004639">
    <property type="entry name" value="4pyrrol_synth_GluAld_NH2Trfase"/>
</dbReference>
<dbReference type="InterPro" id="IPR005814">
    <property type="entry name" value="Aminotrans_3"/>
</dbReference>
<dbReference type="InterPro" id="IPR049704">
    <property type="entry name" value="Aminotrans_3_PPA_site"/>
</dbReference>
<dbReference type="InterPro" id="IPR015424">
    <property type="entry name" value="PyrdxlP-dep_Trfase"/>
</dbReference>
<dbReference type="InterPro" id="IPR015421">
    <property type="entry name" value="PyrdxlP-dep_Trfase_major"/>
</dbReference>
<dbReference type="InterPro" id="IPR015422">
    <property type="entry name" value="PyrdxlP-dep_Trfase_small"/>
</dbReference>
<dbReference type="NCBIfam" id="TIGR00713">
    <property type="entry name" value="hemL"/>
    <property type="match status" value="1"/>
</dbReference>
<dbReference type="NCBIfam" id="NF000818">
    <property type="entry name" value="PRK00062.1"/>
    <property type="match status" value="1"/>
</dbReference>
<dbReference type="PANTHER" id="PTHR43713">
    <property type="entry name" value="GLUTAMATE-1-SEMIALDEHYDE 2,1-AMINOMUTASE"/>
    <property type="match status" value="1"/>
</dbReference>
<dbReference type="PANTHER" id="PTHR43713:SF3">
    <property type="entry name" value="GLUTAMATE-1-SEMIALDEHYDE 2,1-AMINOMUTASE 1, CHLOROPLASTIC-RELATED"/>
    <property type="match status" value="1"/>
</dbReference>
<dbReference type="Pfam" id="PF00202">
    <property type="entry name" value="Aminotran_3"/>
    <property type="match status" value="1"/>
</dbReference>
<dbReference type="SUPFAM" id="SSF53383">
    <property type="entry name" value="PLP-dependent transferases"/>
    <property type="match status" value="1"/>
</dbReference>
<dbReference type="PROSITE" id="PS00600">
    <property type="entry name" value="AA_TRANSFER_CLASS_3"/>
    <property type="match status" value="1"/>
</dbReference>
<proteinExistence type="inferred from homology"/>
<organism>
    <name type="scientific">Mycobacterium leprae (strain Br4923)</name>
    <dbReference type="NCBI Taxonomy" id="561304"/>
    <lineage>
        <taxon>Bacteria</taxon>
        <taxon>Bacillati</taxon>
        <taxon>Actinomycetota</taxon>
        <taxon>Actinomycetes</taxon>
        <taxon>Mycobacteriales</taxon>
        <taxon>Mycobacteriaceae</taxon>
        <taxon>Mycobacterium</taxon>
    </lineage>
</organism>
<accession>B8ZT67</accession>
<gene>
    <name evidence="1" type="primary">hemL</name>
    <name type="ordered locus">MLBr02414</name>
</gene>
<reference key="1">
    <citation type="journal article" date="2009" name="Nat. Genet.">
        <title>Comparative genomic and phylogeographic analysis of Mycobacterium leprae.</title>
        <authorList>
            <person name="Monot M."/>
            <person name="Honore N."/>
            <person name="Garnier T."/>
            <person name="Zidane N."/>
            <person name="Sherafi D."/>
            <person name="Paniz-Mondolfi A."/>
            <person name="Matsuoka M."/>
            <person name="Taylor G.M."/>
            <person name="Donoghue H.D."/>
            <person name="Bouwman A."/>
            <person name="Mays S."/>
            <person name="Watson C."/>
            <person name="Lockwood D."/>
            <person name="Khamispour A."/>
            <person name="Dowlati Y."/>
            <person name="Jianping S."/>
            <person name="Rea T.H."/>
            <person name="Vera-Cabrera L."/>
            <person name="Stefani M.M."/>
            <person name="Banu S."/>
            <person name="Macdonald M."/>
            <person name="Sapkota B.R."/>
            <person name="Spencer J.S."/>
            <person name="Thomas J."/>
            <person name="Harshman K."/>
            <person name="Singh P."/>
            <person name="Busso P."/>
            <person name="Gattiker A."/>
            <person name="Rougemont J."/>
            <person name="Brennan P.J."/>
            <person name="Cole S.T."/>
        </authorList>
    </citation>
    <scope>NUCLEOTIDE SEQUENCE [LARGE SCALE GENOMIC DNA]</scope>
    <source>
        <strain>Br4923</strain>
    </source>
</reference>